<sequence length="78" mass="9084">MSRVCQVTGKRPMVGHKVSHANNKTKRRFLPNIQNHKFWVEEENRFVTLRLSTKGMRIIDKLGIKAVLDKIRAKGEKI</sequence>
<gene>
    <name evidence="1" type="primary">rpmB</name>
    <name type="ordered locus">lpp0544</name>
</gene>
<feature type="chain" id="PRO_0000178489" description="Large ribosomal subunit protein bL28">
    <location>
        <begin position="1"/>
        <end position="78"/>
    </location>
</feature>
<proteinExistence type="inferred from homology"/>
<protein>
    <recommendedName>
        <fullName evidence="1">Large ribosomal subunit protein bL28</fullName>
    </recommendedName>
    <alternativeName>
        <fullName evidence="2">50S ribosomal protein L28</fullName>
    </alternativeName>
</protein>
<keyword id="KW-0687">Ribonucleoprotein</keyword>
<keyword id="KW-0689">Ribosomal protein</keyword>
<dbReference type="EMBL" id="CR628336">
    <property type="protein sequence ID" value="CAH11692.1"/>
    <property type="molecule type" value="Genomic_DNA"/>
</dbReference>
<dbReference type="RefSeq" id="WP_010946227.1">
    <property type="nucleotide sequence ID" value="NC_006368.1"/>
</dbReference>
<dbReference type="SMR" id="Q5X7R1"/>
<dbReference type="GeneID" id="57034480"/>
<dbReference type="KEGG" id="lpp:lpp0544"/>
<dbReference type="LegioList" id="lpp0544"/>
<dbReference type="HOGENOM" id="CLU_064548_3_1_6"/>
<dbReference type="GO" id="GO:0022625">
    <property type="term" value="C:cytosolic large ribosomal subunit"/>
    <property type="evidence" value="ECO:0007669"/>
    <property type="project" value="TreeGrafter"/>
</dbReference>
<dbReference type="GO" id="GO:0003735">
    <property type="term" value="F:structural constituent of ribosome"/>
    <property type="evidence" value="ECO:0007669"/>
    <property type="project" value="InterPro"/>
</dbReference>
<dbReference type="GO" id="GO:0006412">
    <property type="term" value="P:translation"/>
    <property type="evidence" value="ECO:0007669"/>
    <property type="project" value="UniProtKB-UniRule"/>
</dbReference>
<dbReference type="FunFam" id="2.30.170.40:FF:000001">
    <property type="entry name" value="50S ribosomal protein L28"/>
    <property type="match status" value="1"/>
</dbReference>
<dbReference type="Gene3D" id="2.30.170.40">
    <property type="entry name" value="Ribosomal protein L28/L24"/>
    <property type="match status" value="1"/>
</dbReference>
<dbReference type="HAMAP" id="MF_00373">
    <property type="entry name" value="Ribosomal_bL28"/>
    <property type="match status" value="1"/>
</dbReference>
<dbReference type="InterPro" id="IPR026569">
    <property type="entry name" value="Ribosomal_bL28"/>
</dbReference>
<dbReference type="InterPro" id="IPR034704">
    <property type="entry name" value="Ribosomal_bL28/bL31-like_sf"/>
</dbReference>
<dbReference type="InterPro" id="IPR001383">
    <property type="entry name" value="Ribosomal_bL28_bact-type"/>
</dbReference>
<dbReference type="InterPro" id="IPR037147">
    <property type="entry name" value="Ribosomal_bL28_sf"/>
</dbReference>
<dbReference type="NCBIfam" id="TIGR00009">
    <property type="entry name" value="L28"/>
    <property type="match status" value="1"/>
</dbReference>
<dbReference type="PANTHER" id="PTHR13528">
    <property type="entry name" value="39S RIBOSOMAL PROTEIN L28, MITOCHONDRIAL"/>
    <property type="match status" value="1"/>
</dbReference>
<dbReference type="PANTHER" id="PTHR13528:SF2">
    <property type="entry name" value="LARGE RIBOSOMAL SUBUNIT PROTEIN BL28M"/>
    <property type="match status" value="1"/>
</dbReference>
<dbReference type="Pfam" id="PF00830">
    <property type="entry name" value="Ribosomal_L28"/>
    <property type="match status" value="1"/>
</dbReference>
<dbReference type="SUPFAM" id="SSF143800">
    <property type="entry name" value="L28p-like"/>
    <property type="match status" value="1"/>
</dbReference>
<evidence type="ECO:0000255" key="1">
    <source>
        <dbReference type="HAMAP-Rule" id="MF_00373"/>
    </source>
</evidence>
<evidence type="ECO:0000305" key="2"/>
<organism>
    <name type="scientific">Legionella pneumophila (strain Paris)</name>
    <dbReference type="NCBI Taxonomy" id="297246"/>
    <lineage>
        <taxon>Bacteria</taxon>
        <taxon>Pseudomonadati</taxon>
        <taxon>Pseudomonadota</taxon>
        <taxon>Gammaproteobacteria</taxon>
        <taxon>Legionellales</taxon>
        <taxon>Legionellaceae</taxon>
        <taxon>Legionella</taxon>
    </lineage>
</organism>
<name>RL28_LEGPA</name>
<accession>Q5X7R1</accession>
<reference key="1">
    <citation type="journal article" date="2004" name="Nat. Genet.">
        <title>Evidence in the Legionella pneumophila genome for exploitation of host cell functions and high genome plasticity.</title>
        <authorList>
            <person name="Cazalet C."/>
            <person name="Rusniok C."/>
            <person name="Brueggemann H."/>
            <person name="Zidane N."/>
            <person name="Magnier A."/>
            <person name="Ma L."/>
            <person name="Tichit M."/>
            <person name="Jarraud S."/>
            <person name="Bouchier C."/>
            <person name="Vandenesch F."/>
            <person name="Kunst F."/>
            <person name="Etienne J."/>
            <person name="Glaser P."/>
            <person name="Buchrieser C."/>
        </authorList>
    </citation>
    <scope>NUCLEOTIDE SEQUENCE [LARGE SCALE GENOMIC DNA]</scope>
    <source>
        <strain>Paris</strain>
    </source>
</reference>
<comment type="similarity">
    <text evidence="1">Belongs to the bacterial ribosomal protein bL28 family.</text>
</comment>